<comment type="subcellular location">
    <subcellularLocation>
        <location evidence="4">Secreted</location>
        <location evidence="4">Extracellular space</location>
    </subcellularLocation>
</comment>
<comment type="tissue specificity">
    <text evidence="2">Chorionic epithelium (trophectoderm) and placental cotyledons.</text>
</comment>
<comment type="developmental stage">
    <text evidence="2">Expressed at 120 dpc.</text>
</comment>
<comment type="miscellaneous">
    <text evidence="2">On the 2D-gel the determined pI of this protein is: 6, its MW is: 71 kDa.</text>
</comment>
<comment type="similarity">
    <text evidence="1">Belongs to the peptidase A1 family.</text>
</comment>
<sequence length="19" mass="2229">RGSNLTHPLRNIRDLFYVG</sequence>
<keyword id="KW-0064">Aspartyl protease</keyword>
<keyword id="KW-0903">Direct protein sequencing</keyword>
<keyword id="KW-0325">Glycoprotein</keyword>
<keyword id="KW-0378">Hydrolase</keyword>
<keyword id="KW-0645">Protease</keyword>
<keyword id="KW-0964">Secreted</keyword>
<proteinExistence type="evidence at protein level"/>
<name>PA71G_BISBO</name>
<dbReference type="EC" id="3.4.23.-"/>
<dbReference type="iPTMnet" id="P85325"/>
<dbReference type="GO" id="GO:0005576">
    <property type="term" value="C:extracellular region"/>
    <property type="evidence" value="ECO:0007669"/>
    <property type="project" value="UniProtKB-SubCell"/>
</dbReference>
<dbReference type="GO" id="GO:0004190">
    <property type="term" value="F:aspartic-type endopeptidase activity"/>
    <property type="evidence" value="ECO:0007669"/>
    <property type="project" value="UniProtKB-KW"/>
</dbReference>
<dbReference type="GO" id="GO:0006508">
    <property type="term" value="P:proteolysis"/>
    <property type="evidence" value="ECO:0007669"/>
    <property type="project" value="UniProtKB-KW"/>
</dbReference>
<feature type="chain" id="PRO_0000314073" description="Pregnancy-associated glycoprotein 71G">
    <location>
        <begin position="1"/>
        <end position="19" status="greater than"/>
    </location>
</feature>
<feature type="glycosylation site" description="N-linked (GlcNAc...) asparagine" evidence="2">
    <location>
        <position position="4"/>
    </location>
</feature>
<feature type="non-terminal residue" evidence="3">
    <location>
        <position position="19"/>
    </location>
</feature>
<evidence type="ECO:0000255" key="1"/>
<evidence type="ECO:0000269" key="2">
    <source>
    </source>
</evidence>
<evidence type="ECO:0000303" key="3">
    <source>
    </source>
</evidence>
<evidence type="ECO:0000305" key="4"/>
<protein>
    <recommendedName>
        <fullName>Pregnancy-associated glycoprotein 71G</fullName>
        <ecNumber>3.4.23.-</ecNumber>
    </recommendedName>
    <alternativeName>
        <fullName>EbPAG-G 71 kDa</fullName>
    </alternativeName>
</protein>
<organism>
    <name type="scientific">Bison bonasus</name>
    <name type="common">European bison</name>
    <dbReference type="NCBI Taxonomy" id="9902"/>
    <lineage>
        <taxon>Eukaryota</taxon>
        <taxon>Metazoa</taxon>
        <taxon>Chordata</taxon>
        <taxon>Craniata</taxon>
        <taxon>Vertebrata</taxon>
        <taxon>Euteleostomi</taxon>
        <taxon>Mammalia</taxon>
        <taxon>Eutheria</taxon>
        <taxon>Laurasiatheria</taxon>
        <taxon>Artiodactyla</taxon>
        <taxon>Ruminantia</taxon>
        <taxon>Pecora</taxon>
        <taxon>Bovidae</taxon>
        <taxon>Bovinae</taxon>
        <taxon>Bison</taxon>
    </lineage>
</organism>
<reference key="1">
    <citation type="journal article" date="2009" name="Anim. Reprod. Sci.">
        <title>Identification of multiple pregnancy-associated glycoproteins (PAGs) purified from the European bison (Eb; Bison bonasus L.) placentas.</title>
        <authorList>
            <person name="Kiewisz J."/>
            <person name="Melo de Sousa N."/>
            <person name="Beckers J.-F.M.P."/>
            <person name="Panasiewicz G."/>
            <person name="Gizejewski Z."/>
            <person name="Szafranska B."/>
        </authorList>
    </citation>
    <scope>PROTEIN SEQUENCE</scope>
    <scope>TISSUE SPECIFICITY</scope>
    <scope>DEVELOPMENTAL STAGE</scope>
    <scope>GLYCOSYLATION AT ASN-4</scope>
    <source>
        <tissue>Placenta</tissue>
    </source>
</reference>
<accession>P85325</accession>